<protein>
    <recommendedName>
        <fullName>Paired amphipathic helix protein Sin3a</fullName>
    </recommendedName>
    <alternativeName>
        <fullName>Histone deacetylase complex subunit Sin3a</fullName>
    </alternativeName>
    <alternativeName>
        <fullName>Transcriptional corepressor Sin3a</fullName>
    </alternativeName>
</protein>
<organism>
    <name type="scientific">Mus musculus</name>
    <name type="common">Mouse</name>
    <dbReference type="NCBI Taxonomy" id="10090"/>
    <lineage>
        <taxon>Eukaryota</taxon>
        <taxon>Metazoa</taxon>
        <taxon>Chordata</taxon>
        <taxon>Craniata</taxon>
        <taxon>Vertebrata</taxon>
        <taxon>Euteleostomi</taxon>
        <taxon>Mammalia</taxon>
        <taxon>Eutheria</taxon>
        <taxon>Euarchontoglires</taxon>
        <taxon>Glires</taxon>
        <taxon>Rodentia</taxon>
        <taxon>Myomorpha</taxon>
        <taxon>Muroidea</taxon>
        <taxon>Muridae</taxon>
        <taxon>Murinae</taxon>
        <taxon>Mus</taxon>
        <taxon>Mus</taxon>
    </lineage>
</organism>
<comment type="function">
    <text evidence="6 20 21 23 25 27">Acts as a transcriptional repressor. Corepressor for REST. Interacts with MXI1 to repress MYC responsive genes and antagonize MYC oncogenic activities. Also interacts with MXD1-MAX heterodimers to repress transcription by tethering SIN3A to DNA. Acts cooperatively with OGT to repress transcription in parallel with histone deacetylation. Involved in the control of the circadian rhythms. Required for the transcriptional repression of circadian target genes, such as PER1, mediated by the large PER complex through histone deacetylation. Cooperates with FOXK1 to regulate cell cycle progression probably by repressing cell cycle inhibitor genes expression (PubMed:22476904). Required for cortical neuron differentiation and callosal axon elongation (PubMed:27399968).</text>
</comment>
<comment type="subunit">
    <text evidence="2 6 7 8 9 10 11 12 13 14 15 16 17 18 19 20 21 22 24 25 26 27 28 29">Interacts with ARID4B, BRMS1L, HCFC1, HDAC1, HDAC2, MXI1, SAP30L, SAP130, SFPQ and TOPORS (PubMed:8649810). Interacts with OGT (via TPRs 1-6); the interaction mediates transcriptional repression in parallel with histone deacetylase (By similarity). Interacts with BAZ2A, MXD1, MXD3, MXD4, MBD2, DACH1, NCOR1, NR4A2, REST, RLIM, SAP30, SETDB1, SMYD2, and SUDS3 (PubMed:10734093, PubMed:10950960, PubMed:11106735, PubMed:11882901, PubMed:11909966, PubMed:12130660, PubMed:12198165, PubMed:12398767, PubMed:16805913, PubMed:19144721, PubMed:7889570, PubMed:8521822, PubMed:9139820, PubMed:9702189). Interacts with PHF12 in a complex composed of HDAC1, PHF12 and SAP30 (PubMed:11390640). Interacts with TET1; the interaction recruits SIN3A to gene promoters (PubMed:21490601). The large PER complex involved in the histone deacetylation is composed of at least HDAC1, PER2, SFPQ and SIN3A (PubMed:21680841). Interacts with KLF11 (PubMed:15774581). Interacts with PPHLN1 (By similarity). Found in a complex with YY1, GON4L and HDAC1 (PubMed:21454521). Interacts (via PAH2) with FOXK1 (PubMed:22476904, PubMed:25402684). Interacts with FOXK2 (PubMed:25402684). Found in a complex composed of at least SINHCAF, SIN3A, HDAC1, SAP30, RBBP4, OGT and TET1 (PubMed:28554894). Interacts with SINHCAF (PubMed:28554894). Interacts with SPHK2 (By similarity).</text>
</comment>
<comment type="interaction">
    <interactant intactId="EBI-349034">
        <id>Q60520</id>
    </interactant>
    <interactant intactId="EBI-301912">
        <id>O09106</id>
        <label>Hdac1</label>
    </interactant>
    <organismsDiffer>false</organismsDiffer>
    <experiments>9</experiments>
</comment>
<comment type="interaction">
    <interactant intactId="EBI-349034">
        <id>Q60520</id>
    </interactant>
    <interactant intactId="EBI-302251">
        <id>P70288</id>
        <label>Hdac2</label>
    </interactant>
    <organismsDiffer>false</organismsDiffer>
    <experiments>7</experiments>
</comment>
<comment type="interaction">
    <interactant intactId="EBI-349034">
        <id>Q60520</id>
    </interactant>
    <interactant intactId="EBI-1188816">
        <id>Q9Z2D6</id>
        <label>Mecp2</label>
    </interactant>
    <organismsDiffer>false</organismsDiffer>
    <experiments>5</experiments>
</comment>
<comment type="interaction">
    <interactant intactId="EBI-349034">
        <id>Q60520</id>
    </interactant>
    <interactant intactId="EBI-937195">
        <id>Q1EHW4</id>
        <label>Sap25</label>
    </interactant>
    <organismsDiffer>false</organismsDiffer>
    <experiments>4</experiments>
</comment>
<comment type="interaction">
    <interactant intactId="EBI-349034">
        <id>Q60520</id>
    </interactant>
    <interactant intactId="EBI-593511">
        <id>O88574</id>
        <label>Sap30</label>
    </interactant>
    <organismsDiffer>false</organismsDiffer>
    <experiments>6</experiments>
</comment>
<comment type="interaction">
    <interactant intactId="EBI-349034">
        <id>Q60520</id>
    </interactant>
    <interactant intactId="EBI-2313612">
        <id>P48432</id>
        <label>Sox2</label>
    </interactant>
    <organismsDiffer>false</organismsDiffer>
    <experiments>3</experiments>
</comment>
<comment type="interaction">
    <interactant intactId="EBI-349034">
        <id>Q60520</id>
    </interactant>
    <interactant intactId="EBI-591431">
        <id>Q8BR65</id>
        <label>Suds3</label>
    </interactant>
    <organismsDiffer>false</organismsDiffer>
    <experiments>4</experiments>
</comment>
<comment type="interaction">
    <interactant intactId="EBI-349034">
        <id>Q60520</id>
    </interactant>
    <interactant intactId="EBI-4291699">
        <id>Q3URK3</id>
        <label>Tet1</label>
    </interactant>
    <organismsDiffer>false</organismsDiffer>
    <experiments>2</experiments>
</comment>
<comment type="interaction">
    <interactant intactId="EBI-349034">
        <id>Q60520</id>
    </interactant>
    <interactant intactId="EBI-7959025">
        <id>Q99583</id>
        <label>MNT</label>
    </interactant>
    <organismsDiffer>true</organismsDiffer>
    <experiments>3</experiments>
</comment>
<comment type="subcellular location">
    <subcellularLocation>
        <location evidence="18">Nucleus</location>
    </subcellularLocation>
    <subcellularLocation>
        <location evidence="2">Nucleus</location>
        <location evidence="2">Nucleolus</location>
    </subcellularLocation>
    <text evidence="2 18">Recruited to the nucleolus by SAP30L.</text>
</comment>
<comment type="alternative products">
    <event type="alternative splicing"/>
    <isoform>
        <id>Q60520-2</id>
        <name>1</name>
        <sequence type="displayed"/>
    </isoform>
    <isoform>
        <id>Q60520-1</id>
        <name>2</name>
        <sequence type="described" ref="VSP_039918"/>
    </isoform>
</comment>
<comment type="tissue specificity">
    <text evidence="23">Widely expressed. Highest levels in testis, lung and thymus. Expressed at relatively high levels throughout brain development. In adult mice, expression is high in neurogenic regions such as the subventricular zone, rostral migratory stream, olfactory bulb and dentate gyrus (PubMed:27399968).</text>
</comment>
<comment type="PTM">
    <text evidence="2">SUMO1 sumoylated by TOPORS. Probably desumoylated by SENP2.</text>
</comment>
<comment type="disruption phenotype">
    <text evidence="23">SIN3A knockdown causes a significant decrease in the amount of cortical progenitors in the proliferative zone at the peak of neurogenesis, and results in altered neuronal identity and aberrant corticocortical projections.</text>
</comment>
<comment type="sequence caution" evidence="33">
    <conflict type="miscellaneous discrepancy">
        <sequence resource="EMBL-CDS" id="AAB01610"/>
    </conflict>
    <text>The cDNA contains an internal 15bp tandem duplication.</text>
</comment>
<comment type="sequence caution" evidence="33">
    <conflict type="miscellaneous discrepancy">
        <sequence resource="EMBL-CDS" id="AAH52716"/>
    </conflict>
    <text>Probable cloning artifact leading to an internal deletion.</text>
</comment>
<comment type="sequence caution" evidence="33">
    <conflict type="miscellaneous discrepancy">
        <sequence resource="EMBL-CDS" id="AAH53385"/>
    </conflict>
    <text>Contaminating sequence. Potential poly-A sequence.</text>
</comment>
<comment type="sequence caution" evidence="33">
    <conflict type="erroneous initiation">
        <sequence resource="EMBL-CDS" id="BAD90217"/>
    </conflict>
    <text>Extended N-terminus.</text>
</comment>
<gene>
    <name type="primary">Sin3a</name>
    <name type="synonym">Kiaa4126</name>
</gene>
<evidence type="ECO:0000250" key="1"/>
<evidence type="ECO:0000250" key="2">
    <source>
        <dbReference type="UniProtKB" id="Q96ST3"/>
    </source>
</evidence>
<evidence type="ECO:0000255" key="3"/>
<evidence type="ECO:0000255" key="4">
    <source>
        <dbReference type="PROSITE-ProRule" id="PRU00810"/>
    </source>
</evidence>
<evidence type="ECO:0000256" key="5">
    <source>
        <dbReference type="SAM" id="MobiDB-lite"/>
    </source>
</evidence>
<evidence type="ECO:0000269" key="6">
    <source>
    </source>
</evidence>
<evidence type="ECO:0000269" key="7">
    <source>
    </source>
</evidence>
<evidence type="ECO:0000269" key="8">
    <source>
    </source>
</evidence>
<evidence type="ECO:0000269" key="9">
    <source>
    </source>
</evidence>
<evidence type="ECO:0000269" key="10">
    <source>
    </source>
</evidence>
<evidence type="ECO:0000269" key="11">
    <source>
    </source>
</evidence>
<evidence type="ECO:0000269" key="12">
    <source>
    </source>
</evidence>
<evidence type="ECO:0000269" key="13">
    <source>
    </source>
</evidence>
<evidence type="ECO:0000269" key="14">
    <source>
    </source>
</evidence>
<evidence type="ECO:0000269" key="15">
    <source>
    </source>
</evidence>
<evidence type="ECO:0000269" key="16">
    <source>
    </source>
</evidence>
<evidence type="ECO:0000269" key="17">
    <source>
    </source>
</evidence>
<evidence type="ECO:0000269" key="18">
    <source>
    </source>
</evidence>
<evidence type="ECO:0000269" key="19">
    <source>
    </source>
</evidence>
<evidence type="ECO:0000269" key="20">
    <source>
    </source>
</evidence>
<evidence type="ECO:0000269" key="21">
    <source>
    </source>
</evidence>
<evidence type="ECO:0000269" key="22">
    <source>
    </source>
</evidence>
<evidence type="ECO:0000269" key="23">
    <source>
    </source>
</evidence>
<evidence type="ECO:0000269" key="24">
    <source>
    </source>
</evidence>
<evidence type="ECO:0000269" key="25">
    <source>
    </source>
</evidence>
<evidence type="ECO:0000269" key="26">
    <source>
    </source>
</evidence>
<evidence type="ECO:0000269" key="27">
    <source>
    </source>
</evidence>
<evidence type="ECO:0000269" key="28">
    <source>
    </source>
</evidence>
<evidence type="ECO:0000269" key="29">
    <source>
    </source>
</evidence>
<evidence type="ECO:0000303" key="30">
    <source>
    </source>
</evidence>
<evidence type="ECO:0000303" key="31">
    <source>
    </source>
</evidence>
<evidence type="ECO:0000303" key="32">
    <source ref="3"/>
</evidence>
<evidence type="ECO:0000305" key="33"/>
<evidence type="ECO:0000312" key="34">
    <source>
        <dbReference type="EMBL" id="AAH52716.1"/>
    </source>
</evidence>
<evidence type="ECO:0000312" key="35">
    <source>
        <dbReference type="EMBL" id="AAH53385.1"/>
    </source>
</evidence>
<evidence type="ECO:0007744" key="36">
    <source>
    </source>
</evidence>
<evidence type="ECO:0007744" key="37">
    <source>
    </source>
</evidence>
<evidence type="ECO:0007744" key="38">
    <source>
    </source>
</evidence>
<evidence type="ECO:0007744" key="39">
    <source>
    </source>
</evidence>
<evidence type="ECO:0007829" key="40">
    <source>
        <dbReference type="PDB" id="1G1E"/>
    </source>
</evidence>
<evidence type="ECO:0007829" key="41">
    <source>
        <dbReference type="PDB" id="1S5R"/>
    </source>
</evidence>
<evidence type="ECO:0007829" key="42">
    <source>
        <dbReference type="PDB" id="2LD7"/>
    </source>
</evidence>
<evidence type="ECO:0007829" key="43">
    <source>
        <dbReference type="PDB" id="2N2H"/>
    </source>
</evidence>
<evidence type="ECO:0007829" key="44">
    <source>
        <dbReference type="PDB" id="2RMR"/>
    </source>
</evidence>
<evidence type="ECO:0007829" key="45">
    <source>
        <dbReference type="PDB" id="2RMS"/>
    </source>
</evidence>
<proteinExistence type="evidence at protein level"/>
<accession>Q60520</accession>
<accession>Q570Z7</accession>
<accession>Q60820</accession>
<accession>Q62139</accession>
<accession>Q62140</accession>
<accession>Q7TPU8</accession>
<accession>Q7TSZ2</accession>
<keyword id="KW-0002">3D-structure</keyword>
<keyword id="KW-0007">Acetylation</keyword>
<keyword id="KW-0025">Alternative splicing</keyword>
<keyword id="KW-0090">Biological rhythms</keyword>
<keyword id="KW-0175">Coiled coil</keyword>
<keyword id="KW-1017">Isopeptide bond</keyword>
<keyword id="KW-0539">Nucleus</keyword>
<keyword id="KW-0597">Phosphoprotein</keyword>
<keyword id="KW-1185">Reference proteome</keyword>
<keyword id="KW-0677">Repeat</keyword>
<keyword id="KW-0678">Repressor</keyword>
<keyword id="KW-0804">Transcription</keyword>
<keyword id="KW-0805">Transcription regulation</keyword>
<keyword id="KW-0832">Ubl conjugation</keyword>
<feature type="chain" id="PRO_0000121538" description="Paired amphipathic helix protein Sin3a">
    <location>
        <begin position="1"/>
        <end position="1274"/>
    </location>
</feature>
<feature type="domain" description="PAH 1" evidence="4">
    <location>
        <begin position="119"/>
        <end position="189"/>
    </location>
</feature>
<feature type="domain" description="PAH 2" evidence="4">
    <location>
        <begin position="300"/>
        <end position="383"/>
    </location>
</feature>
<feature type="domain" description="PAH 3" evidence="4">
    <location>
        <begin position="457"/>
        <end position="526"/>
    </location>
</feature>
<feature type="region of interest" description="Disordered" evidence="5">
    <location>
        <begin position="1"/>
        <end position="26"/>
    </location>
</feature>
<feature type="region of interest" description="Disordered" evidence="5">
    <location>
        <begin position="85"/>
        <end position="110"/>
    </location>
</feature>
<feature type="region of interest" description="Interaction with HCFC1" evidence="2">
    <location>
        <begin position="119"/>
        <end position="196"/>
    </location>
</feature>
<feature type="region of interest" description="Interaction with REST" evidence="6">
    <location>
        <begin position="205"/>
        <end position="479"/>
    </location>
</feature>
<feature type="region of interest" description="Disordered" evidence="5">
    <location>
        <begin position="205"/>
        <end position="297"/>
    </location>
</feature>
<feature type="region of interest" description="Disordered" evidence="5">
    <location>
        <begin position="398"/>
        <end position="443"/>
    </location>
</feature>
<feature type="region of interest" description="Interaction with SAP30" evidence="29">
    <location>
        <begin position="459"/>
        <end position="526"/>
    </location>
</feature>
<feature type="region of interest" description="Interaction with NCOR1">
    <location>
        <begin position="524"/>
        <end position="851"/>
    </location>
</feature>
<feature type="region of interest" description="Interactions with SUDS3 and SAP130" evidence="1">
    <location>
        <begin position="525"/>
        <end position="660"/>
    </location>
</feature>
<feature type="region of interest" description="Interactions with HDAC1 and ARID4B" evidence="1">
    <location>
        <begin position="688"/>
        <end position="830"/>
    </location>
</feature>
<feature type="region of interest" description="Disordered" evidence="5">
    <location>
        <begin position="835"/>
        <end position="865"/>
    </location>
</feature>
<feature type="region of interest" description="Interaction with OGT" evidence="1">
    <location>
        <begin position="889"/>
        <end position="968"/>
    </location>
</feature>
<feature type="region of interest" description="Disordered" evidence="5">
    <location>
        <begin position="1137"/>
        <end position="1157"/>
    </location>
</feature>
<feature type="coiled-coil region" evidence="3">
    <location>
        <begin position="904"/>
        <end position="933"/>
    </location>
</feature>
<feature type="compositionally biased region" description="Low complexity" evidence="5">
    <location>
        <begin position="228"/>
        <end position="237"/>
    </location>
</feature>
<feature type="compositionally biased region" description="Polar residues" evidence="5">
    <location>
        <begin position="252"/>
        <end position="266"/>
    </location>
</feature>
<feature type="compositionally biased region" description="Pro residues" evidence="5">
    <location>
        <begin position="267"/>
        <end position="282"/>
    </location>
</feature>
<feature type="compositionally biased region" description="Polar residues" evidence="5">
    <location>
        <begin position="284"/>
        <end position="297"/>
    </location>
</feature>
<feature type="compositionally biased region" description="Polar residues" evidence="5">
    <location>
        <begin position="412"/>
        <end position="425"/>
    </location>
</feature>
<feature type="compositionally biased region" description="Acidic residues" evidence="5">
    <location>
        <begin position="835"/>
        <end position="847"/>
    </location>
</feature>
<feature type="compositionally biased region" description="Basic and acidic residues" evidence="5">
    <location>
        <begin position="1139"/>
        <end position="1157"/>
    </location>
</feature>
<feature type="modified residue" description="Phosphoserine" evidence="2">
    <location>
        <position position="10"/>
    </location>
</feature>
<feature type="modified residue" description="Phosphoserine" evidence="38">
    <location>
        <position position="277"/>
    </location>
</feature>
<feature type="modified residue" description="Phosphothreonine" evidence="38">
    <location>
        <position position="284"/>
    </location>
</feature>
<feature type="modified residue" description="N6-acetyllysine" evidence="2">
    <location>
        <position position="470"/>
    </location>
</feature>
<feature type="modified residue" description="Phosphoserine" evidence="36 37 38">
    <location>
        <position position="833"/>
    </location>
</feature>
<feature type="modified residue" description="Phosphoserine" evidence="2">
    <location>
        <position position="861"/>
    </location>
</feature>
<feature type="modified residue" description="N6-acetyllysine" evidence="39">
    <location>
        <position position="866"/>
    </location>
</feature>
<feature type="modified residue" description="N6-acetyllysine" evidence="39">
    <location>
        <position position="876"/>
    </location>
</feature>
<feature type="modified residue" description="Phosphoserine" evidence="2">
    <location>
        <position position="941"/>
    </location>
</feature>
<feature type="modified residue" description="Phosphoserine" evidence="2">
    <location>
        <position position="1090"/>
    </location>
</feature>
<feature type="modified residue" description="Phosphoserine" evidence="38">
    <location>
        <position position="1113"/>
    </location>
</feature>
<feature type="cross-link" description="Glycyl lysine isopeptide (Lys-Gly) (interchain with G-Cter in SUMO2)" evidence="2">
    <location>
        <position position="122"/>
    </location>
</feature>
<feature type="cross-link" description="Glycyl lysine isopeptide (Lys-Gly) (interchain with G-Cter in SUMO2)" evidence="2">
    <location>
        <position position="134"/>
    </location>
</feature>
<feature type="cross-link" description="Glycyl lysine isopeptide (Lys-Gly) (interchain with G-Cter in SUMO2)" evidence="2">
    <location>
        <position position="564"/>
    </location>
</feature>
<feature type="splice variant" id="VSP_039918" description="In isoform 2." evidence="30 31 32">
    <original>E</original>
    <variation>EVWT</variation>
    <location>
        <position position="1097"/>
    </location>
</feature>
<feature type="mutagenesis site" description="Greatly reduced binding to MAD; when associated with D-308 and A-311." evidence="8">
    <original>A</original>
    <variation>V</variation>
    <location>
        <position position="307"/>
    </location>
</feature>
<feature type="mutagenesis site" description="Greatly reduced binding to MAD; when associated with V-307 and A-311." evidence="8">
    <original>I</original>
    <variation>D</variation>
    <location>
        <position position="308"/>
    </location>
</feature>
<feature type="mutagenesis site" description="No effect on binding to MAD." evidence="8">
    <original>N</original>
    <variation>D</variation>
    <location>
        <position position="309"/>
    </location>
</feature>
<feature type="mutagenesis site" description="Greatly reduced binding to MAD; when associated with V-307 and D-308." evidence="8">
    <original>V</original>
    <variation>A</variation>
    <location>
        <position position="311"/>
    </location>
</feature>
<feature type="mutagenesis site" description="No effect on binding to MAD." evidence="8">
    <original>K</original>
    <variation>A</variation>
    <location>
        <position position="326"/>
    </location>
</feature>
<feature type="mutagenesis site" description="Greatly reduced binding to MAD; when associated with A-332." evidence="8">
    <original>L</original>
    <variation>A</variation>
    <location>
        <position position="329"/>
    </location>
</feature>
<feature type="mutagenesis site" description="Greatly reduced binding to MAD; when associated with A-329." evidence="8">
    <original>L</original>
    <variation>A</variation>
    <location>
        <position position="332"/>
    </location>
</feature>
<feature type="sequence conflict" description="In Ref. 1; AAB01610." evidence="33" ref="1">
    <original>Y</original>
    <variation>H</variation>
    <location>
        <position position="144"/>
    </location>
</feature>
<feature type="sequence conflict" description="In Ref. 4; AAH53385." evidence="33" ref="4">
    <original>F</original>
    <variation>L</variation>
    <location>
        <position position="154"/>
    </location>
</feature>
<feature type="sequence conflict" description="In Ref. 1; AAB01610." evidence="33" ref="1">
    <original>E</original>
    <variation>H</variation>
    <location>
        <position position="303"/>
    </location>
</feature>
<feature type="sequence conflict" description="In Ref. 4; AAH53385." evidence="33" ref="4">
    <original>E</original>
    <variation>G</variation>
    <location>
        <position position="514"/>
    </location>
</feature>
<feature type="sequence conflict" description="In Ref. 1; AAB01610." evidence="33" ref="1">
    <original>EQ</original>
    <variation>DE</variation>
    <location>
        <begin position="720"/>
        <end position="721"/>
    </location>
</feature>
<feature type="sequence conflict" description="In Ref. 2; AAA89119." evidence="33" ref="2">
    <original>A</original>
    <variation>D</variation>
    <location>
        <position position="827"/>
    </location>
</feature>
<feature type="sequence conflict" description="In Ref. 4; AAH52716." evidence="33" ref="4">
    <original>L</original>
    <variation>R</variation>
    <location>
        <position position="899"/>
    </location>
</feature>
<feature type="sequence conflict" description="In Ref. 4; AAH52716." evidence="33" ref="4">
    <original>S</original>
    <variation>F</variation>
    <location>
        <position position="912"/>
    </location>
</feature>
<feature type="sequence conflict" description="In Ref. 1; AAB01610." evidence="33" ref="1">
    <original>S</original>
    <variation>Q</variation>
    <location>
        <position position="969"/>
    </location>
</feature>
<feature type="sequence conflict" description="In Ref. 1; AAB01610." evidence="33" ref="1">
    <original>L</original>
    <variation>V</variation>
    <location>
        <position position="1047"/>
    </location>
</feature>
<feature type="sequence conflict" description="In Ref. 5; AAA69773." evidence="33" ref="5">
    <original>KRL</original>
    <variation>QGK</variation>
    <location>
        <begin position="1205"/>
        <end position="1207"/>
    </location>
</feature>
<feature type="sequence conflict" description="In Ref. 5; AAA69772." evidence="33" ref="5">
    <original>K</original>
    <variation>KK</variation>
    <location>
        <position position="1205"/>
    </location>
</feature>
<feature type="sequence conflict" description="In Ref. 5; AAA69772." evidence="33" ref="5">
    <original>VD</original>
    <variation>GK</variation>
    <location>
        <begin position="1215"/>
        <end position="1216"/>
    </location>
</feature>
<feature type="helix" evidence="44">
    <location>
        <begin position="126"/>
        <end position="136"/>
    </location>
</feature>
<feature type="helix" evidence="45">
    <location>
        <begin position="137"/>
        <end position="139"/>
    </location>
</feature>
<feature type="helix" evidence="44">
    <location>
        <begin position="141"/>
        <end position="155"/>
    </location>
</feature>
<feature type="helix" evidence="44">
    <location>
        <begin position="161"/>
        <end position="171"/>
    </location>
</feature>
<feature type="turn" evidence="44">
    <location>
        <begin position="172"/>
        <end position="174"/>
    </location>
</feature>
<feature type="helix" evidence="44">
    <location>
        <begin position="176"/>
        <end position="183"/>
    </location>
</feature>
<feature type="helix" evidence="40">
    <location>
        <begin position="302"/>
        <end position="317"/>
    </location>
</feature>
<feature type="turn" evidence="40">
    <location>
        <begin position="318"/>
        <end position="320"/>
    </location>
</feature>
<feature type="helix" evidence="40">
    <location>
        <begin position="322"/>
        <end position="344"/>
    </location>
</feature>
<feature type="strand" evidence="41">
    <location>
        <begin position="347"/>
        <end position="349"/>
    </location>
</feature>
<feature type="helix" evidence="40">
    <location>
        <begin position="355"/>
        <end position="365"/>
    </location>
</feature>
<feature type="turn" evidence="40">
    <location>
        <begin position="366"/>
        <end position="368"/>
    </location>
</feature>
<feature type="helix" evidence="40">
    <location>
        <begin position="370"/>
        <end position="377"/>
    </location>
</feature>
<feature type="turn" evidence="42">
    <location>
        <begin position="457"/>
        <end position="460"/>
    </location>
</feature>
<feature type="helix" evidence="42">
    <location>
        <begin position="463"/>
        <end position="475"/>
    </location>
</feature>
<feature type="helix" evidence="42">
    <location>
        <begin position="478"/>
        <end position="492"/>
    </location>
</feature>
<feature type="helix" evidence="42">
    <location>
        <begin position="498"/>
        <end position="504"/>
    </location>
</feature>
<feature type="helix" evidence="42">
    <location>
        <begin position="506"/>
        <end position="509"/>
    </location>
</feature>
<feature type="helix" evidence="42">
    <location>
        <begin position="513"/>
        <end position="523"/>
    </location>
</feature>
<feature type="helix" evidence="43">
    <location>
        <begin position="616"/>
        <end position="641"/>
    </location>
</feature>
<feature type="helix" evidence="43">
    <location>
        <begin position="646"/>
        <end position="651"/>
    </location>
</feature>
<feature type="turn" evidence="43">
    <location>
        <begin position="660"/>
        <end position="662"/>
    </location>
</feature>
<feature type="helix" evidence="43">
    <location>
        <begin position="663"/>
        <end position="673"/>
    </location>
</feature>
<feature type="helix" evidence="43">
    <location>
        <begin position="675"/>
        <end position="677"/>
    </location>
</feature>
<feature type="helix" evidence="43">
    <location>
        <begin position="678"/>
        <end position="685"/>
    </location>
</feature>
<feature type="helix" evidence="43">
    <location>
        <begin position="689"/>
        <end position="713"/>
    </location>
</feature>
<feature type="helix" evidence="43">
    <location>
        <begin position="715"/>
        <end position="723"/>
    </location>
</feature>
<name>SIN3A_MOUSE</name>
<reference key="1">
    <citation type="journal article" date="1995" name="Genomics">
        <title>A widely distributed putative mammalian transcriptional regulator containing multiple paired amphipathic helices, with similarity to yeast SIN3.</title>
        <authorList>
            <person name="Halleck M.S."/>
            <person name="Pownall S."/>
            <person name="Harder K.W."/>
            <person name="Duncan A.M.V."/>
            <person name="Jirik F.R."/>
            <person name="Schlegel R.A."/>
        </authorList>
    </citation>
    <scope>NUCLEOTIDE SEQUENCE [MRNA] (ISOFORM 2)</scope>
    <source>
        <strain>129</strain>
        <tissue>Teratocarcinoma</tissue>
    </source>
</reference>
<reference key="2">
    <citation type="journal article" date="1996" name="Oncogene">
        <title>Mouse Sin3A interacts with and can functionally substitute for the amino-terminal repression of the Myc antagonist Mxi1.</title>
        <authorList>
            <person name="Rao G."/>
            <person name="Alland L."/>
            <person name="Guida P."/>
            <person name="Schreiber-Agus N."/>
            <person name="Chin L."/>
            <person name="Chen K."/>
            <person name="Rochelle J.M."/>
            <person name="Seldin M.F."/>
            <person name="Skoultchi A.I."/>
            <person name="DePinho R.A."/>
        </authorList>
    </citation>
    <scope>NUCLEOTIDE SEQUENCE [MRNA] (ISOFORM 1)</scope>
    <scope>FUNCTION</scope>
    <scope>INTERACTION WITH MXI1</scope>
    <source>
        <strain>ICR</strain>
        <tissue>Brain</tissue>
    </source>
</reference>
<reference key="3">
    <citation type="submission" date="2005-02" db="EMBL/GenBank/DDBJ databases">
        <title>Prediction of the coding sequences of mouse homologues of KIAA gene. The complete nucleotide sequences of mouse KIAA-homologous cDNAs identified by screening of terminal sequences of cDNA clones randomly sampled from size-fractionated libraries.</title>
        <authorList>
            <person name="Okazaki N."/>
            <person name="Kikuno R.F."/>
            <person name="Ohara R."/>
            <person name="Inamoto S."/>
            <person name="Nagase T."/>
            <person name="Ohara O."/>
            <person name="Koga H."/>
        </authorList>
    </citation>
    <scope>NUCLEOTIDE SEQUENCE [LARGE SCALE MRNA] (ISOFORM 2)</scope>
    <source>
        <tissue>Pancreatic islet</tissue>
    </source>
</reference>
<reference evidence="33 34" key="4">
    <citation type="journal article" date="2004" name="Genome Res.">
        <title>The status, quality, and expansion of the NIH full-length cDNA project: the Mammalian Gene Collection (MGC).</title>
        <authorList>
            <consortium name="The MGC Project Team"/>
        </authorList>
    </citation>
    <scope>NUCLEOTIDE SEQUENCE [LARGE SCALE MRNA] (ISOFORM 2)</scope>
    <scope>NUCLEOTIDE SEQUENCE [LARGE SCALE MRNA] OF 1-1146 (ISOFORM 1)</scope>
    <source>
        <strain evidence="34">C57BL/6J</strain>
        <tissue evidence="34">Brain</tissue>
        <tissue evidence="35">Egg</tissue>
    </source>
</reference>
<reference key="5">
    <citation type="journal article" date="1995" name="Cell">
        <title>Mad-Max transcriptional repression is mediated by ternary complex formation with mammalian homologs of yeast repressor Sin3.</title>
        <authorList>
            <person name="Ayer D.E."/>
            <person name="Lawrence Q.A."/>
            <person name="Eisenman R.N."/>
        </authorList>
    </citation>
    <scope>NUCLEOTIDE SEQUENCE [MRNA] OF 1-1216 (ISOFORM 1)</scope>
    <scope>FUNCTION</scope>
    <scope>INTERACTION WITH MXD1</scope>
    <source>
        <tissue>Embryo</tissue>
    </source>
</reference>
<reference key="6">
    <citation type="submission" date="2006-04" db="EMBL/GenBank/DDBJ databases">
        <authorList>
            <person name="Ayer D.E."/>
            <person name="Lawrence Q.A."/>
            <person name="Eisenman R.N."/>
        </authorList>
    </citation>
    <scope>SEQUENCE REVISION TO C-TERMINUS</scope>
</reference>
<reference key="7">
    <citation type="journal article" date="1995" name="EMBO J.">
        <title>Mad3 and Mad4: novel Max-interacting transcriptional repressors that suppress c-myc dependent transformation and are expressed during neural and epidermal differentiation.</title>
        <authorList>
            <person name="Hurlin P.J."/>
            <person name="Queva C."/>
            <person name="Koskinen P.J."/>
            <person name="Steingrimsson E."/>
            <person name="Ayer D.E."/>
            <person name="Copeland N.G."/>
            <person name="Jenkins N.A."/>
            <person name="Eisenman R.N."/>
        </authorList>
    </citation>
    <scope>INTERACTION WITH MXD3 AND MXD4</scope>
</reference>
<reference key="8">
    <citation type="journal article" date="1996" name="EMBO J.">
        <authorList>
            <person name="Hurlin P.J."/>
            <person name="Queva C."/>
            <person name="Koskinen P.J."/>
            <person name="Steingrimsson E."/>
            <person name="Ayer D.E."/>
            <person name="Copeland N.G."/>
            <person name="Jenkins N.A."/>
            <person name="Eisenman R.N."/>
        </authorList>
    </citation>
    <scope>ERRATUM OF PUBMED:8521822</scope>
</reference>
<reference key="9">
    <citation type="journal article" date="1997" name="Nature">
        <title>A complex containing N-CoR, mSin3 and histone deacetylase mediates transcriptional repression.</title>
        <authorList>
            <person name="Heinzel T."/>
            <person name="Lavinsky R.M."/>
            <person name="Mullen T.-M."/>
            <person name="Soederstroem M."/>
            <person name="Laherty C.D."/>
            <person name="Torchia J."/>
            <person name="Yang W.M."/>
            <person name="Brard G."/>
            <person name="Ngo S.D."/>
            <person name="Davie J.R."/>
            <person name="Seto E."/>
            <person name="Eisenman R.N."/>
            <person name="Rose D.W."/>
            <person name="Glass C.K."/>
            <person name="Rosenfeld M.G."/>
        </authorList>
    </citation>
    <scope>INTERACTION WITH NCOR1</scope>
</reference>
<reference evidence="33" key="10">
    <citation type="journal article" date="1998" name="Mol. Cell">
        <title>SAP30, a component of the mSin3 corepressor complex involved in N-CoR-mediated repression by specific transcription factors.</title>
        <authorList>
            <person name="Laherty C.D."/>
            <person name="Billin A.N."/>
            <person name="Lavinsky R.M."/>
            <person name="Yochum G.S."/>
            <person name="Bush A.C."/>
            <person name="Sun J.-M."/>
            <person name="Mullen T.-M."/>
            <person name="Davie J.R."/>
            <person name="Rose D.W."/>
            <person name="Glass C.K."/>
            <person name="Rosenfeld M.G."/>
            <person name="Ayer D.E."/>
            <person name="Eisenman R.N."/>
        </authorList>
    </citation>
    <scope>INTERACTION WITH SAP30 AND NCOR1</scope>
</reference>
<reference evidence="33" key="11">
    <citation type="journal article" date="2000" name="J. Biol. Chem.">
        <title>The minimal repression domain of MBD2b overlaps with the methyl-CpG-binding domain and binds directly to Sin3A.</title>
        <authorList>
            <person name="Boeke J."/>
            <person name="Ammerpohl O."/>
            <person name="Kegel S."/>
            <person name="Moehren U."/>
            <person name="Renkawitz R."/>
        </authorList>
    </citation>
    <scope>INTERACTION WITH MBD2</scope>
</reference>
<reference key="12">
    <citation type="journal article" date="2000" name="J. Biol. Chem.">
        <title>The co-repressor mSin3A is a functional component of the REST-CoREST repressor complex.</title>
        <authorList>
            <person name="Grimes J.A."/>
            <person name="Nielsen S.J."/>
            <person name="Battaglioli E."/>
            <person name="Miska E.A."/>
            <person name="Speh J.C."/>
            <person name="Berry D.L."/>
            <person name="Atouf F."/>
            <person name="Holdener B.C."/>
            <person name="Mandel G."/>
            <person name="Kouzarides T."/>
        </authorList>
    </citation>
    <scope>FUNCTION</scope>
    <scope>INTERACTION WITH REST</scope>
</reference>
<reference key="13">
    <citation type="journal article" date="2001" name="Mol. Cell. Biol.">
        <title>Pf1, a novel PHD zinc finger protein that links the TLE corepressor to the mSin3A-histone deacetylase complex.</title>
        <authorList>
            <person name="Yochum G.S."/>
            <person name="Ayer D.E."/>
        </authorList>
    </citation>
    <scope>INTERACTION WITH PHF12</scope>
</reference>
<reference key="14">
    <citation type="journal article" date="2002" name="EMBO J.">
        <title>The chromatin remodeling complex NoRC targets HDAC1 to the ribosomal gene promoter and represses RNA polymerase I transcription.</title>
        <authorList>
            <person name="Zhou Y."/>
            <person name="Santoro R."/>
            <person name="Grummt I."/>
        </authorList>
    </citation>
    <scope>INTERACTION WITH BAZ2A</scope>
</reference>
<reference evidence="33" key="15">
    <citation type="journal article" date="2002" name="Mol. Cell. Biol.">
        <title>Identification of mammalian Sds3 as an integral component of the Sin3/histone deacetylase corepressor complex.</title>
        <authorList>
            <person name="Alland L."/>
            <person name="David G."/>
            <person name="Shen-Li H."/>
            <person name="Potes J."/>
            <person name="Muhle R."/>
            <person name="Lee H.-C."/>
            <person name="Hou H. Jr."/>
            <person name="Chen K."/>
            <person name="DePinho R.A."/>
        </authorList>
    </citation>
    <scope>INTERACTION WITH SUDS3</scope>
</reference>
<reference key="16">
    <citation type="journal article" date="2002" name="Nature">
        <title>Ubiquitination-dependent cofactor exchange on LIM homeodomain transcription factors.</title>
        <authorList>
            <person name="Ostendorff H.P."/>
            <person name="Peirano R.I."/>
            <person name="Peters M.A."/>
            <person name="Schluter A."/>
            <person name="Bossenz M."/>
            <person name="Scheffner M."/>
            <person name="Bach I."/>
        </authorList>
    </citation>
    <scope>INTERACTION WITH RLIM</scope>
</reference>
<reference evidence="33" key="17">
    <citation type="journal article" date="2002" name="Science">
        <title>Tissue-specific regulation of retinal and pituitary precursor cell proliferation.</title>
        <authorList>
            <person name="Li X."/>
            <person name="Perissi V."/>
            <person name="Liu F."/>
            <person name="Rose D.W."/>
            <person name="Rosenfeld M.G."/>
        </authorList>
    </citation>
    <scope>INTERACTION WITH DACH1</scope>
</reference>
<reference key="18">
    <citation type="journal article" date="2003" name="Biochem. J.">
        <title>An ERG (ets-related gene)-associated histone methyltransferase interacts with histone deacetylases 1/2 and transcription co-repressors mSin3A/B.</title>
        <authorList>
            <person name="Yang L."/>
            <person name="Mei Q."/>
            <person name="Zielinska-Kwiatkowska A."/>
            <person name="Matsui Y."/>
            <person name="Blackburn M.L."/>
            <person name="Benedetti D."/>
            <person name="Krumm A.A."/>
            <person name="Taborsky G.J. Jr."/>
            <person name="Chansky H.A."/>
        </authorList>
    </citation>
    <scope>INTERACTION WITH SETDB1</scope>
</reference>
<reference key="19">
    <citation type="journal article" date="2004" name="Mol. Cell. Proteomics">
        <title>Phosphoproteomic analysis of the developing mouse brain.</title>
        <authorList>
            <person name="Ballif B.A."/>
            <person name="Villen J."/>
            <person name="Beausoleil S.A."/>
            <person name="Schwartz D."/>
            <person name="Gygi S.P."/>
        </authorList>
    </citation>
    <scope>PHOSPHORYLATION [LARGE SCALE ANALYSIS] AT SER-833</scope>
    <scope>IDENTIFICATION BY MASS SPECTROMETRY [LARGE SCALE ANALYSIS]</scope>
    <source>
        <tissue>Embryonic brain</tissue>
    </source>
</reference>
<reference key="20">
    <citation type="journal article" date="2005" name="Proc. Natl. Acad. Sci. U.S.A.">
        <title>Role of transcription factor KLF11 and its diabetes-associated gene variants in pancreatic beta cell function.</title>
        <authorList>
            <person name="Neve B."/>
            <person name="Fernandez-Zapico M.E."/>
            <person name="Ashkenazi-Katalan V."/>
            <person name="Dina C."/>
            <person name="Hamid Y.H."/>
            <person name="Joly E."/>
            <person name="Vaillant E."/>
            <person name="Benmezroua Y."/>
            <person name="Durand E."/>
            <person name="Bakaher N."/>
            <person name="Delannoy V."/>
            <person name="Vaxillaire M."/>
            <person name="Cook T."/>
            <person name="Dallinga-Thie G.M."/>
            <person name="Jansen H."/>
            <person name="Charles M.-A."/>
            <person name="Clement K."/>
            <person name="Galan P."/>
            <person name="Hercberg S."/>
            <person name="Helbecque N."/>
            <person name="Charpentier G."/>
            <person name="Prentki M."/>
            <person name="Hansen T."/>
            <person name="Pedersen O."/>
            <person name="Urrutia R."/>
            <person name="Melloul D."/>
            <person name="Froguel P."/>
        </authorList>
    </citation>
    <scope>INTERACTION WITH KLF11</scope>
</reference>
<reference key="21">
    <citation type="journal article" date="2006" name="Mol. Cancer">
        <title>Identification and characterization of Smyd2: a split SET/MYND domain-containing histone H3 lysine 36-specific methyltransferase that interacts with the Sin3 histone deacetylase complex.</title>
        <authorList>
            <person name="Brown M.A."/>
            <person name="Sims R.J. III"/>
            <person name="Gottlieb P.D."/>
            <person name="Tucker P.W."/>
        </authorList>
    </citation>
    <scope>INTERACTION WITH SMYD2</scope>
</reference>
<reference key="22">
    <citation type="journal article" date="2007" name="Proc. Natl. Acad. Sci. U.S.A.">
        <title>Large-scale phosphorylation analysis of mouse liver.</title>
        <authorList>
            <person name="Villen J."/>
            <person name="Beausoleil S.A."/>
            <person name="Gerber S.A."/>
            <person name="Gygi S.P."/>
        </authorList>
    </citation>
    <scope>PHOSPHORYLATION [LARGE SCALE ANALYSIS] AT SER-833</scope>
    <scope>IDENTIFICATION BY MASS SPECTROMETRY [LARGE SCALE ANALYSIS]</scope>
    <source>
        <tissue>Liver</tissue>
    </source>
</reference>
<reference key="23">
    <citation type="journal article" date="2009" name="Development">
        <title>Pitx3 potentiates Nurr1 in dopamine neuron terminal differentiation through release of SMRT-mediated repression.</title>
        <authorList>
            <person name="Jacobs F.M."/>
            <person name="van Erp S."/>
            <person name="van der Linden A.J."/>
            <person name="von Oerthel L."/>
            <person name="Burbach J.P."/>
            <person name="Smidt M.P."/>
        </authorList>
    </citation>
    <scope>INTERACTION WITH NR4A2</scope>
</reference>
<reference key="24">
    <citation type="journal article" date="2010" name="Cell">
        <title>A tissue-specific atlas of mouse protein phosphorylation and expression.</title>
        <authorList>
            <person name="Huttlin E.L."/>
            <person name="Jedrychowski M.P."/>
            <person name="Elias J.E."/>
            <person name="Goswami T."/>
            <person name="Rad R."/>
            <person name="Beausoleil S.A."/>
            <person name="Villen J."/>
            <person name="Haas W."/>
            <person name="Sowa M.E."/>
            <person name="Gygi S.P."/>
        </authorList>
    </citation>
    <scope>PHOSPHORYLATION [LARGE SCALE ANALYSIS] AT SER-277; THR-284; SER-833 AND SER-1113</scope>
    <scope>IDENTIFICATION BY MASS SPECTROMETRY [LARGE SCALE ANALYSIS]</scope>
    <source>
        <tissue>Brain</tissue>
        <tissue>Brown adipose tissue</tissue>
        <tissue>Heart</tissue>
        <tissue>Kidney</tissue>
        <tissue>Liver</tissue>
        <tissue>Lung</tissue>
        <tissue>Pancreas</tissue>
        <tissue>Spleen</tissue>
        <tissue>Testis</tissue>
    </source>
</reference>
<reference key="25">
    <citation type="journal article" date="2011" name="J. Biol. Chem.">
        <title>The developmental regulator protein Gon4l associates with protein YY1, co-repressor Sin3a, and histone deacetylase 1 and mediates transcriptional repression.</title>
        <authorList>
            <person name="Lu P."/>
            <person name="Hankel I.L."/>
            <person name="Hostager B.S."/>
            <person name="Swartzendruber J.A."/>
            <person name="Friedman A.D."/>
            <person name="Brenton J.L."/>
            <person name="Rothman P.B."/>
            <person name="Colgan J.D."/>
        </authorList>
    </citation>
    <scope>IDENTIFICATION IN A COMPLEX WITH YY1; GON4L AND HDAC1</scope>
    <scope>SUBCELLULAR LOCATION</scope>
</reference>
<reference key="26">
    <citation type="journal article" date="2011" name="Nature">
        <title>TET1 and hydroxymethylcytosine in transcription and DNA methylation fidelity.</title>
        <authorList>
            <person name="Williams K."/>
            <person name="Christensen J."/>
            <person name="Pedersen M.T."/>
            <person name="Johansen J.V."/>
            <person name="Cloos P.A."/>
            <person name="Rappsilber J."/>
            <person name="Helin K."/>
        </authorList>
    </citation>
    <scope>INTERACTION WITH TET1</scope>
</reference>
<reference key="27">
    <citation type="journal article" date="2011" name="Science">
        <title>A molecular mechanism for circadian clock negative feedback.</title>
        <authorList>
            <person name="Duong H.A."/>
            <person name="Robles M.S."/>
            <person name="Knutti D."/>
            <person name="Weitz C.J."/>
        </authorList>
    </citation>
    <scope>FUNCTION IN CIRCADIAN RHYTHMS</scope>
    <scope>IDENTIFICATION IN A LARGE PER COMPLEX</scope>
</reference>
<reference key="28">
    <citation type="journal article" date="2012" name="Mol. Cell. Biochem.">
        <title>Sin3 interacts with Foxk1 and regulates myogenic progenitors.</title>
        <authorList>
            <person name="Shi X."/>
            <person name="Garry D.J."/>
        </authorList>
    </citation>
    <scope>FUNCTION</scope>
    <scope>INTERACTION WITH FOXK1</scope>
</reference>
<reference key="29">
    <citation type="journal article" date="2013" name="Mol. Cell">
        <title>SIRT5-mediated lysine desuccinylation impacts diverse metabolic pathways.</title>
        <authorList>
            <person name="Park J."/>
            <person name="Chen Y."/>
            <person name="Tishkoff D.X."/>
            <person name="Peng C."/>
            <person name="Tan M."/>
            <person name="Dai L."/>
            <person name="Xie Z."/>
            <person name="Zhang Y."/>
            <person name="Zwaans B.M."/>
            <person name="Skinner M.E."/>
            <person name="Lombard D.B."/>
            <person name="Zhao Y."/>
        </authorList>
    </citation>
    <scope>ACETYLATION [LARGE SCALE ANALYSIS] AT LYS-866 AND LYS-876</scope>
    <scope>IDENTIFICATION BY MASS SPECTROMETRY [LARGE SCALE ANALYSIS]</scope>
    <source>
        <tissue>Embryonic fibroblast</tissue>
    </source>
</reference>
<reference key="30">
    <citation type="journal article" date="2014" name="Nat. Cell Biol.">
        <title>Foxk proteins repress the initiation of starvation-induced atrophy and autophagy programs.</title>
        <authorList>
            <person name="Bowman C.J."/>
            <person name="Ayer D.E."/>
            <person name="Dynlacht B.D."/>
        </authorList>
    </citation>
    <scope>INTERACTION WITH FOXK1 AND FOXK2</scope>
</reference>
<reference key="31">
    <citation type="journal article" date="2016" name="Nat. Genet.">
        <title>Haploinsufficiency of MeCP2-interacting transcriptional co-repressor SIN3A causes mild intellectual disability by affecting the development of cortical integrity.</title>
        <authorList>
            <person name="Witteveen J.S."/>
            <person name="Willemsen M.H."/>
            <person name="Dombroski T.C."/>
            <person name="van Bakel N.H."/>
            <person name="Nillesen W.M."/>
            <person name="van Hulten J.A."/>
            <person name="Jansen E.J."/>
            <person name="Verkaik D."/>
            <person name="Veenstra-Knol H.E."/>
            <person name="van Ravenswaaij-Arts C.M."/>
            <person name="Wassink-Ruiter J.S."/>
            <person name="Vincent M."/>
            <person name="David A."/>
            <person name="Le Caignec C."/>
            <person name="Schieving J."/>
            <person name="Gilissen C."/>
            <person name="Foulds N."/>
            <person name="Rump P."/>
            <person name="Strom T."/>
            <person name="Cremer K."/>
            <person name="Zink A.M."/>
            <person name="Engels H."/>
            <person name="de Munnik S.A."/>
            <person name="Visser J.E."/>
            <person name="Brunner H.G."/>
            <person name="Martens G.J."/>
            <person name="Pfundt R."/>
            <person name="Kleefstra T."/>
            <person name="Kolk S.M."/>
        </authorList>
    </citation>
    <scope>FUNCTION</scope>
    <scope>TISSUE SPECIFICITY</scope>
    <scope>DISRUPTION PHENOTYPE</scope>
</reference>
<reference key="32">
    <citation type="journal article" date="2017" name="EMBO J.">
        <title>Fam60a defines a variant Sin3a-Hdac complex in embryonic stem cells required for self-renewal.</title>
        <authorList>
            <person name="Streubel G."/>
            <person name="Fitzpatrick D.J."/>
            <person name="Oliviero G."/>
            <person name="Scelfo A."/>
            <person name="Moran B."/>
            <person name="Das S."/>
            <person name="Munawar N."/>
            <person name="Watson A."/>
            <person name="Wynne K."/>
            <person name="Negri G.L."/>
            <person name="Dillon E.T."/>
            <person name="Jammula S."/>
            <person name="Hokamp K."/>
            <person name="O'Connor D.P."/>
            <person name="Pasini D."/>
            <person name="Cagney G."/>
            <person name="Bracken A.P."/>
        </authorList>
    </citation>
    <scope>IDENTIFICATION IN A COMPLEX WITH SINHCAF; HDAC1; SAP30; RBBP4; OGT AND TET1</scope>
    <scope>INTERACTION WITH SINHCAF AND HDAC1</scope>
</reference>
<reference key="33">
    <citation type="journal article" date="2000" name="Cell">
        <title>Solution structure of the interacting domains of the Mad-Sin3 complex: implications for recruitment of a chromatin-modifying complex.</title>
        <authorList>
            <person name="Brubaker K."/>
            <person name="Cowley S.M."/>
            <person name="Huang K."/>
            <person name="Loo L."/>
            <person name="Yochum G.S."/>
            <person name="Ayer D.E."/>
            <person name="Eisenman R.N."/>
            <person name="Radhakrishnan I."/>
        </authorList>
    </citation>
    <scope>STRUCTURE BY NMR OF 295-383 IN COMPLEX WITH MXD1</scope>
    <scope>MUTAGENESIS OF ALA-307; ILE-308; ASN-309; VAL-311; LYS-326; LEU-329 AND LEU-332</scope>
</reference>
<dbReference type="EMBL" id="L36831">
    <property type="protein sequence ID" value="AAB01610.1"/>
    <property type="status" value="ALT_SEQ"/>
    <property type="molecule type" value="mRNA"/>
</dbReference>
<dbReference type="EMBL" id="U22394">
    <property type="protein sequence ID" value="AAA89119.1"/>
    <property type="molecule type" value="mRNA"/>
</dbReference>
<dbReference type="EMBL" id="AK220292">
    <property type="protein sequence ID" value="BAD90217.1"/>
    <property type="status" value="ALT_INIT"/>
    <property type="molecule type" value="mRNA"/>
</dbReference>
<dbReference type="EMBL" id="BC052716">
    <property type="protein sequence ID" value="AAH52716.1"/>
    <property type="status" value="ALT_SEQ"/>
    <property type="molecule type" value="mRNA"/>
</dbReference>
<dbReference type="EMBL" id="BC053385">
    <property type="protein sequence ID" value="AAH53385.1"/>
    <property type="status" value="ALT_SEQ"/>
    <property type="molecule type" value="mRNA"/>
</dbReference>
<dbReference type="EMBL" id="L38620">
    <property type="protein sequence ID" value="AAA69773.2"/>
    <property type="molecule type" value="mRNA"/>
</dbReference>
<dbReference type="EMBL" id="L38621">
    <property type="protein sequence ID" value="AAA69772.2"/>
    <property type="molecule type" value="mRNA"/>
</dbReference>
<dbReference type="CCDS" id="CCDS23216.1">
    <molecule id="Q60520-2"/>
</dbReference>
<dbReference type="CCDS" id="CCDS52805.1">
    <molecule id="Q60520-1"/>
</dbReference>
<dbReference type="PIR" id="A56068">
    <property type="entry name" value="A56068"/>
</dbReference>
<dbReference type="PIR" id="I61713">
    <property type="entry name" value="I61713"/>
</dbReference>
<dbReference type="RefSeq" id="NP_001103820.1">
    <molecule id="Q60520-1"/>
    <property type="nucleotide sequence ID" value="NM_001110350.2"/>
</dbReference>
<dbReference type="RefSeq" id="NP_001103821.1">
    <molecule id="Q60520-2"/>
    <property type="nucleotide sequence ID" value="NM_001110351.2"/>
</dbReference>
<dbReference type="RefSeq" id="NP_001344683.1">
    <molecule id="Q60520-2"/>
    <property type="nucleotide sequence ID" value="NM_001357754.2"/>
</dbReference>
<dbReference type="RefSeq" id="NP_001407125.1">
    <molecule id="Q60520-1"/>
    <property type="nucleotide sequence ID" value="NM_001420196.1"/>
</dbReference>
<dbReference type="RefSeq" id="NP_001407126.1">
    <molecule id="Q60520-1"/>
    <property type="nucleotide sequence ID" value="NM_001420197.1"/>
</dbReference>
<dbReference type="RefSeq" id="NP_001407127.1">
    <molecule id="Q60520-1"/>
    <property type="nucleotide sequence ID" value="NM_001420198.1"/>
</dbReference>
<dbReference type="RefSeq" id="NP_001407128.1">
    <molecule id="Q60520-2"/>
    <property type="nucleotide sequence ID" value="NM_001420199.1"/>
</dbReference>
<dbReference type="RefSeq" id="NP_001407129.1">
    <molecule id="Q60520-2"/>
    <property type="nucleotide sequence ID" value="NM_001420200.1"/>
</dbReference>
<dbReference type="RefSeq" id="NP_035508.2">
    <molecule id="Q60520-2"/>
    <property type="nucleotide sequence ID" value="NM_011378.3"/>
</dbReference>
<dbReference type="RefSeq" id="XP_006510953.1">
    <property type="nucleotide sequence ID" value="XM_006510890.3"/>
</dbReference>
<dbReference type="RefSeq" id="XP_006510954.1">
    <property type="nucleotide sequence ID" value="XM_006510891.3"/>
</dbReference>
<dbReference type="RefSeq" id="XP_006510955.1">
    <molecule id="Q60520-1"/>
    <property type="nucleotide sequence ID" value="XM_006510892.5"/>
</dbReference>
<dbReference type="RefSeq" id="XP_006510956.1">
    <molecule id="Q60520-1"/>
    <property type="nucleotide sequence ID" value="XM_006510893.4"/>
</dbReference>
<dbReference type="RefSeq" id="XP_011240985.1">
    <molecule id="Q60520-1"/>
    <property type="nucleotide sequence ID" value="XM_011242683.3"/>
</dbReference>
<dbReference type="RefSeq" id="XP_011240986.1">
    <molecule id="Q60520-1"/>
    <property type="nucleotide sequence ID" value="XM_011242684.4"/>
</dbReference>
<dbReference type="RefSeq" id="XP_011240987.1">
    <molecule id="Q60520-1"/>
    <property type="nucleotide sequence ID" value="XM_011242685.4"/>
</dbReference>
<dbReference type="RefSeq" id="XP_011240988.1">
    <property type="nucleotide sequence ID" value="XM_011242686.2"/>
</dbReference>
<dbReference type="RefSeq" id="XP_017168720.1">
    <property type="nucleotide sequence ID" value="XM_017313231.1"/>
</dbReference>
<dbReference type="RefSeq" id="XP_030100010.1">
    <molecule id="Q60520-2"/>
    <property type="nucleotide sequence ID" value="XM_030244150.1"/>
</dbReference>
<dbReference type="RefSeq" id="XP_036010639.1">
    <molecule id="Q60520-2"/>
    <property type="nucleotide sequence ID" value="XM_036154746.1"/>
</dbReference>
<dbReference type="PDB" id="1G1E">
    <property type="method" value="NMR"/>
    <property type="chains" value="B=295-383"/>
</dbReference>
<dbReference type="PDB" id="1S5Q">
    <property type="method" value="NMR"/>
    <property type="chains" value="B=295-383"/>
</dbReference>
<dbReference type="PDB" id="1S5R">
    <property type="method" value="NMR"/>
    <property type="chains" value="B=295-383"/>
</dbReference>
<dbReference type="PDB" id="2L9S">
    <property type="method" value="NMR"/>
    <property type="chains" value="B=295-385"/>
</dbReference>
<dbReference type="PDB" id="2LD7">
    <property type="method" value="NMR"/>
    <property type="chains" value="B=456-528"/>
</dbReference>
<dbReference type="PDB" id="2N2H">
    <property type="method" value="NMR"/>
    <property type="chains" value="B=608-729"/>
</dbReference>
<dbReference type="PDB" id="2RMR">
    <property type="method" value="NMR"/>
    <property type="chains" value="A=119-189"/>
</dbReference>
<dbReference type="PDB" id="2RMS">
    <property type="method" value="NMR"/>
    <property type="chains" value="A=119-189"/>
</dbReference>
<dbReference type="PDBsum" id="1G1E"/>
<dbReference type="PDBsum" id="1S5Q"/>
<dbReference type="PDBsum" id="1S5R"/>
<dbReference type="PDBsum" id="2L9S"/>
<dbReference type="PDBsum" id="2LD7"/>
<dbReference type="PDBsum" id="2N2H"/>
<dbReference type="PDBsum" id="2RMR"/>
<dbReference type="PDBsum" id="2RMS"/>
<dbReference type="BMRB" id="Q60520"/>
<dbReference type="SMR" id="Q60520"/>
<dbReference type="BioGRID" id="203256">
    <property type="interactions" value="97"/>
</dbReference>
<dbReference type="ComplexPortal" id="CPX-3441">
    <property type="entry name" value="SIN3A histone deacetylase complex, ES cell-specific variant"/>
</dbReference>
<dbReference type="ComplexPortal" id="CPX-3443">
    <property type="entry name" value="SIN3A histone deacetylase complex"/>
</dbReference>
<dbReference type="CORUM" id="Q60520"/>
<dbReference type="DIP" id="DIP-469N"/>
<dbReference type="FunCoup" id="Q60520">
    <property type="interactions" value="3975"/>
</dbReference>
<dbReference type="IntAct" id="Q60520">
    <property type="interactions" value="38"/>
</dbReference>
<dbReference type="MINT" id="Q60520"/>
<dbReference type="STRING" id="10090.ENSMUSP00000130221"/>
<dbReference type="GlyGen" id="Q60520">
    <property type="glycosylation" value="7 sites, 1 O-linked glycan (4 sites)"/>
</dbReference>
<dbReference type="iPTMnet" id="Q60520"/>
<dbReference type="PhosphoSitePlus" id="Q60520"/>
<dbReference type="jPOST" id="Q60520"/>
<dbReference type="PaxDb" id="10090-ENSMUSP00000130221"/>
<dbReference type="PeptideAtlas" id="Q60520"/>
<dbReference type="ProteomicsDB" id="261047">
    <molecule id="Q60520-2"/>
</dbReference>
<dbReference type="ProteomicsDB" id="261048">
    <molecule id="Q60520-1"/>
</dbReference>
<dbReference type="Pumba" id="Q60520"/>
<dbReference type="Antibodypedia" id="3857">
    <property type="antibodies" value="273 antibodies from 38 providers"/>
</dbReference>
<dbReference type="DNASU" id="20466"/>
<dbReference type="Ensembl" id="ENSMUST00000049169.6">
    <molecule id="Q60520-2"/>
    <property type="protein sequence ID" value="ENSMUSP00000045044.6"/>
    <property type="gene ID" value="ENSMUSG00000042557.15"/>
</dbReference>
<dbReference type="Ensembl" id="ENSMUST00000167715.8">
    <molecule id="Q60520-2"/>
    <property type="protein sequence ID" value="ENSMUSP00000130641.2"/>
    <property type="gene ID" value="ENSMUSG00000042557.15"/>
</dbReference>
<dbReference type="Ensembl" id="ENSMUST00000168177.8">
    <molecule id="Q60520-1"/>
    <property type="protein sequence ID" value="ENSMUSP00000130221.2"/>
    <property type="gene ID" value="ENSMUSG00000042557.15"/>
</dbReference>
<dbReference type="Ensembl" id="ENSMUST00000168502.8">
    <molecule id="Q60520-1"/>
    <property type="protein sequence ID" value="ENSMUSP00000128956.2"/>
    <property type="gene ID" value="ENSMUSG00000042557.15"/>
</dbReference>
<dbReference type="Ensembl" id="ENSMUST00000168678.8">
    <molecule id="Q60520-2"/>
    <property type="protein sequence ID" value="ENSMUSP00000126601.2"/>
    <property type="gene ID" value="ENSMUSG00000042557.15"/>
</dbReference>
<dbReference type="GeneID" id="20466"/>
<dbReference type="KEGG" id="mmu:20466"/>
<dbReference type="UCSC" id="uc009ptx.2">
    <molecule id="Q60520-1"/>
    <property type="organism name" value="mouse"/>
</dbReference>
<dbReference type="UCSC" id="uc012gtw.1">
    <molecule id="Q60520-2"/>
    <property type="organism name" value="mouse"/>
</dbReference>
<dbReference type="AGR" id="MGI:107157"/>
<dbReference type="CTD" id="25942"/>
<dbReference type="MGI" id="MGI:107157">
    <property type="gene designation" value="Sin3a"/>
</dbReference>
<dbReference type="VEuPathDB" id="HostDB:ENSMUSG00000042557"/>
<dbReference type="eggNOG" id="KOG4204">
    <property type="taxonomic scope" value="Eukaryota"/>
</dbReference>
<dbReference type="GeneTree" id="ENSGT00940000155491"/>
<dbReference type="HOGENOM" id="CLU_001360_0_1_1"/>
<dbReference type="InParanoid" id="Q60520"/>
<dbReference type="OMA" id="MCEEVIK"/>
<dbReference type="OrthoDB" id="10265969at2759"/>
<dbReference type="PhylomeDB" id="Q60520"/>
<dbReference type="TreeFam" id="TF106187"/>
<dbReference type="Reactome" id="R-MMU-3899300">
    <property type="pathway name" value="SUMOylation of transcription cofactors"/>
</dbReference>
<dbReference type="Reactome" id="R-MMU-400206">
    <property type="pathway name" value="Regulation of lipid metabolism by PPARalpha"/>
</dbReference>
<dbReference type="Reactome" id="R-MMU-8936459">
    <property type="pathway name" value="RUNX1 regulates genes involved in megakaryocyte differentiation and platelet function"/>
</dbReference>
<dbReference type="Reactome" id="R-MMU-9022692">
    <property type="pathway name" value="Regulation of MECP2 expression and activity"/>
</dbReference>
<dbReference type="Reactome" id="R-MMU-9707564">
    <property type="pathway name" value="Cytoprotection by HMOX1"/>
</dbReference>
<dbReference type="Reactome" id="R-MMU-9824594">
    <property type="pathway name" value="Regulation of MITF-M-dependent genes involved in apoptosis"/>
</dbReference>
<dbReference type="Reactome" id="R-MMU-9825892">
    <property type="pathway name" value="Regulation of MITF-M-dependent genes involved in cell cycle and proliferation"/>
</dbReference>
<dbReference type="BioGRID-ORCS" id="20466">
    <property type="hits" value="21 hits in 87 CRISPR screens"/>
</dbReference>
<dbReference type="ChiTaRS" id="Sin3a">
    <property type="organism name" value="mouse"/>
</dbReference>
<dbReference type="EvolutionaryTrace" id="Q60520"/>
<dbReference type="PRO" id="PR:Q60520"/>
<dbReference type="Proteomes" id="UP000000589">
    <property type="component" value="Chromosome 9"/>
</dbReference>
<dbReference type="RNAct" id="Q60520">
    <property type="molecule type" value="protein"/>
</dbReference>
<dbReference type="Bgee" id="ENSMUSG00000042557">
    <property type="expression patterns" value="Expressed in animal zygote and 268 other cell types or tissues"/>
</dbReference>
<dbReference type="ExpressionAtlas" id="Q60520">
    <property type="expression patterns" value="baseline and differential"/>
</dbReference>
<dbReference type="GO" id="GO:0000776">
    <property type="term" value="C:kinetochore"/>
    <property type="evidence" value="ECO:0000314"/>
    <property type="project" value="MGI"/>
</dbReference>
<dbReference type="GO" id="GO:0005730">
    <property type="term" value="C:nucleolus"/>
    <property type="evidence" value="ECO:0007669"/>
    <property type="project" value="UniProtKB-SubCell"/>
</dbReference>
<dbReference type="GO" id="GO:0005654">
    <property type="term" value="C:nucleoplasm"/>
    <property type="evidence" value="ECO:0000304"/>
    <property type="project" value="Reactome"/>
</dbReference>
<dbReference type="GO" id="GO:0005634">
    <property type="term" value="C:nucleus"/>
    <property type="evidence" value="ECO:0000314"/>
    <property type="project" value="UniProtKB"/>
</dbReference>
<dbReference type="GO" id="GO:0070822">
    <property type="term" value="C:Sin3-type complex"/>
    <property type="evidence" value="ECO:0000303"/>
    <property type="project" value="ComplexPortal"/>
</dbReference>
<dbReference type="GO" id="GO:0005667">
    <property type="term" value="C:transcription regulator complex"/>
    <property type="evidence" value="ECO:0000353"/>
    <property type="project" value="MGI"/>
</dbReference>
<dbReference type="GO" id="GO:0017053">
    <property type="term" value="C:transcription repressor complex"/>
    <property type="evidence" value="ECO:0000314"/>
    <property type="project" value="UniProtKB"/>
</dbReference>
<dbReference type="GO" id="GO:0003682">
    <property type="term" value="F:chromatin binding"/>
    <property type="evidence" value="ECO:0000314"/>
    <property type="project" value="MGI"/>
</dbReference>
<dbReference type="GO" id="GO:0003677">
    <property type="term" value="F:DNA binding"/>
    <property type="evidence" value="ECO:0000314"/>
    <property type="project" value="MGI"/>
</dbReference>
<dbReference type="GO" id="GO:0044877">
    <property type="term" value="F:protein-containing complex binding"/>
    <property type="evidence" value="ECO:0007669"/>
    <property type="project" value="Ensembl"/>
</dbReference>
<dbReference type="GO" id="GO:0003723">
    <property type="term" value="F:RNA binding"/>
    <property type="evidence" value="ECO:0007669"/>
    <property type="project" value="Ensembl"/>
</dbReference>
<dbReference type="GO" id="GO:0061629">
    <property type="term" value="F:RNA polymerase II-specific DNA-binding transcription factor binding"/>
    <property type="evidence" value="ECO:0000353"/>
    <property type="project" value="MGI"/>
</dbReference>
<dbReference type="GO" id="GO:0003714">
    <property type="term" value="F:transcription corepressor activity"/>
    <property type="evidence" value="ECO:0000314"/>
    <property type="project" value="UniProtKB"/>
</dbReference>
<dbReference type="GO" id="GO:0140416">
    <property type="term" value="F:transcription regulator inhibitor activity"/>
    <property type="evidence" value="ECO:0007669"/>
    <property type="project" value="Ensembl"/>
</dbReference>
<dbReference type="GO" id="GO:0002218">
    <property type="term" value="P:activation of innate immune response"/>
    <property type="evidence" value="ECO:0007669"/>
    <property type="project" value="Ensembl"/>
</dbReference>
<dbReference type="GO" id="GO:1903351">
    <property type="term" value="P:cellular response to dopamine"/>
    <property type="evidence" value="ECO:0007669"/>
    <property type="project" value="Ensembl"/>
</dbReference>
<dbReference type="GO" id="GO:0071333">
    <property type="term" value="P:cellular response to glucose stimulus"/>
    <property type="evidence" value="ECO:0000314"/>
    <property type="project" value="MGI"/>
</dbReference>
<dbReference type="GO" id="GO:0072736">
    <property type="term" value="P:cellular response to tert-butyl hydroperoxide"/>
    <property type="evidence" value="ECO:0007669"/>
    <property type="project" value="Ensembl"/>
</dbReference>
<dbReference type="GO" id="GO:0021895">
    <property type="term" value="P:cerebral cortex neuron differentiation"/>
    <property type="evidence" value="ECO:0000315"/>
    <property type="project" value="UniProtKB"/>
</dbReference>
<dbReference type="GO" id="GO:0006260">
    <property type="term" value="P:DNA replication"/>
    <property type="evidence" value="ECO:0000315"/>
    <property type="project" value="MGI"/>
</dbReference>
<dbReference type="GO" id="GO:0002244">
    <property type="term" value="P:hematopoietic progenitor cell differentiation"/>
    <property type="evidence" value="ECO:0000315"/>
    <property type="project" value="MGI"/>
</dbReference>
<dbReference type="GO" id="GO:0031507">
    <property type="term" value="P:heterochromatin formation"/>
    <property type="evidence" value="ECO:0007669"/>
    <property type="project" value="Ensembl"/>
</dbReference>
<dbReference type="GO" id="GO:0001701">
    <property type="term" value="P:in utero embryonic development"/>
    <property type="evidence" value="ECO:0000315"/>
    <property type="project" value="MGI"/>
</dbReference>
<dbReference type="GO" id="GO:0043066">
    <property type="term" value="P:negative regulation of apoptotic process"/>
    <property type="evidence" value="ECO:0000315"/>
    <property type="project" value="MGI"/>
</dbReference>
<dbReference type="GO" id="GO:0030336">
    <property type="term" value="P:negative regulation of cell migration"/>
    <property type="evidence" value="ECO:0000303"/>
    <property type="project" value="ComplexPortal"/>
</dbReference>
<dbReference type="GO" id="GO:0042754">
    <property type="term" value="P:negative regulation of circadian rhythm"/>
    <property type="evidence" value="ECO:0000315"/>
    <property type="project" value="UniProtKB"/>
</dbReference>
<dbReference type="GO" id="GO:0045892">
    <property type="term" value="P:negative regulation of DNA-templated transcription"/>
    <property type="evidence" value="ECO:0000314"/>
    <property type="project" value="UniProtKB"/>
</dbReference>
<dbReference type="GO" id="GO:1900181">
    <property type="term" value="P:negative regulation of protein localization to nucleus"/>
    <property type="evidence" value="ECO:0007669"/>
    <property type="project" value="Ensembl"/>
</dbReference>
<dbReference type="GO" id="GO:1902455">
    <property type="term" value="P:negative regulation of stem cell population maintenance"/>
    <property type="evidence" value="ECO:0000303"/>
    <property type="project" value="ComplexPortal"/>
</dbReference>
<dbReference type="GO" id="GO:0000122">
    <property type="term" value="P:negative regulation of transcription by RNA polymerase II"/>
    <property type="evidence" value="ECO:0000316"/>
    <property type="project" value="MGI"/>
</dbReference>
<dbReference type="GO" id="GO:0030512">
    <property type="term" value="P:negative regulation of transforming growth factor beta receptor signaling pathway"/>
    <property type="evidence" value="ECO:0000303"/>
    <property type="project" value="ComplexPortal"/>
</dbReference>
<dbReference type="GO" id="GO:0002230">
    <property type="term" value="P:positive regulation of defense response to virus by host"/>
    <property type="evidence" value="ECO:0007669"/>
    <property type="project" value="Ensembl"/>
</dbReference>
<dbReference type="GO" id="GO:0010971">
    <property type="term" value="P:positive regulation of G2/M transition of mitotic cell cycle"/>
    <property type="evidence" value="ECO:0000315"/>
    <property type="project" value="MGI"/>
</dbReference>
<dbReference type="GO" id="GO:0045666">
    <property type="term" value="P:positive regulation of neuron differentiation"/>
    <property type="evidence" value="ECO:0000315"/>
    <property type="project" value="UniProtKB"/>
</dbReference>
<dbReference type="GO" id="GO:1902459">
    <property type="term" value="P:positive regulation of stem cell population maintenance"/>
    <property type="evidence" value="ECO:0000303"/>
    <property type="project" value="ComplexPortal"/>
</dbReference>
<dbReference type="GO" id="GO:0008104">
    <property type="term" value="P:protein localization"/>
    <property type="evidence" value="ECO:0000315"/>
    <property type="project" value="MGI"/>
</dbReference>
<dbReference type="GO" id="GO:0030516">
    <property type="term" value="P:regulation of axon extension"/>
    <property type="evidence" value="ECO:0000315"/>
    <property type="project" value="UniProtKB"/>
</dbReference>
<dbReference type="GO" id="GO:0006355">
    <property type="term" value="P:regulation of DNA-templated transcription"/>
    <property type="evidence" value="ECO:0000315"/>
    <property type="project" value="MGI"/>
</dbReference>
<dbReference type="GO" id="GO:0010817">
    <property type="term" value="P:regulation of hormone levels"/>
    <property type="evidence" value="ECO:0007669"/>
    <property type="project" value="Ensembl"/>
</dbReference>
<dbReference type="GO" id="GO:0051595">
    <property type="term" value="P:response to methylglyoxal"/>
    <property type="evidence" value="ECO:0000314"/>
    <property type="project" value="MGI"/>
</dbReference>
<dbReference type="GO" id="GO:0048511">
    <property type="term" value="P:rhythmic process"/>
    <property type="evidence" value="ECO:0007669"/>
    <property type="project" value="UniProtKB-KW"/>
</dbReference>
<dbReference type="GO" id="GO:0060337">
    <property type="term" value="P:type I interferon-mediated signaling pathway"/>
    <property type="evidence" value="ECO:0007669"/>
    <property type="project" value="Ensembl"/>
</dbReference>
<dbReference type="FunFam" id="1.20.1160.11:FF:000002">
    <property type="entry name" value="Paired amphipathic helix protein SIN3"/>
    <property type="match status" value="1"/>
</dbReference>
<dbReference type="FunFam" id="1.20.1160.11:FF:000001">
    <property type="entry name" value="Paired amphipathic helix protein Sin3"/>
    <property type="match status" value="1"/>
</dbReference>
<dbReference type="FunFam" id="1.20.1160.11:FF:000004">
    <property type="entry name" value="Paired amphipathic helix protein Sin3a"/>
    <property type="match status" value="1"/>
</dbReference>
<dbReference type="Gene3D" id="1.20.1160.11">
    <property type="entry name" value="Paired amphipathic helix"/>
    <property type="match status" value="3"/>
</dbReference>
<dbReference type="IDEAL" id="IID50089"/>
<dbReference type="InterPro" id="IPR013194">
    <property type="entry name" value="HDAC_interact_dom"/>
</dbReference>
<dbReference type="InterPro" id="IPR003822">
    <property type="entry name" value="PAH"/>
</dbReference>
<dbReference type="InterPro" id="IPR036600">
    <property type="entry name" value="PAH_sf"/>
</dbReference>
<dbReference type="InterPro" id="IPR039774">
    <property type="entry name" value="Sin3-like"/>
</dbReference>
<dbReference type="InterPro" id="IPR031693">
    <property type="entry name" value="Sin3_C"/>
</dbReference>
<dbReference type="PANTHER" id="PTHR12346:SF2">
    <property type="entry name" value="PAIRED AMPHIPATHIC HELIX PROTEIN SIN3A"/>
    <property type="match status" value="1"/>
</dbReference>
<dbReference type="PANTHER" id="PTHR12346">
    <property type="entry name" value="SIN3B-RELATED"/>
    <property type="match status" value="1"/>
</dbReference>
<dbReference type="Pfam" id="PF02671">
    <property type="entry name" value="PAH"/>
    <property type="match status" value="3"/>
</dbReference>
<dbReference type="Pfam" id="PF08295">
    <property type="entry name" value="Sin3_corepress"/>
    <property type="match status" value="1"/>
</dbReference>
<dbReference type="Pfam" id="PF16879">
    <property type="entry name" value="Sin3a_C"/>
    <property type="match status" value="1"/>
</dbReference>
<dbReference type="SMART" id="SM00761">
    <property type="entry name" value="HDAC_interact"/>
    <property type="match status" value="1"/>
</dbReference>
<dbReference type="SUPFAM" id="SSF47762">
    <property type="entry name" value="PAH2 domain"/>
    <property type="match status" value="3"/>
</dbReference>
<dbReference type="PROSITE" id="PS51477">
    <property type="entry name" value="PAH"/>
    <property type="match status" value="3"/>
</dbReference>
<sequence length="1274" mass="145088">MKRRLDDQESPVYAAQQRRIPGSTEAFSHQHRVLAPAPPVYEAVSETMQSATGIQYSVAPNYQVSAVPQSSGSHGPAIAAVHSSHHHPTAVQPHGGQVVQSHAHPAPPVAPVQGQQQFQRLKVEDALSYLDQVKLQFGSQPQVYNDFLDIMKEFKSQSIDTPGVISRVSQLFKGHPDLIMGFNTFLPPGYKIEVQTNDMVNVTTPGQVHQIPTHGIQPQPQPPPQHPSQPSSQSAPTPAQPAPQPTAAKVSKPSQLQAHTPASQQTPPLPPYASPRSPPVQPHTPVTISLGTAPSLQNNQPVEFNHAINYVNKIKNRFQGQPDIYKAFLEILHTYQKEQRNAKEAGGNYTPALTEQEVYAQVARLFKNQEDLLSEFGQFLPDANSSVLLSKTTAEKVDSVRNDHGGTVKKPQLNNKPQRPSQNGCQIRRHSGTGATPPVKKKPKLMSLKESSMADASKHGVGTESLFFDKVRKALRSAEAYENFLRCLVIFNQEVISRAELVQLVSPFLGKFPELFNWFKNFLGYKESVHLESFPKERATEGIAMEIDYASCKRLGSSYRALPKSYQQPKCTGRTPLCKEVLNDTWVSFPSWSEDSTFVSSKKTQYEEHIYRCEDERFELDVVLETNLATIRVLEAIQKKLSRLSAEEQAKFRLDNTLGGTSEVIHRKALQRIYADKAADIIDGLRKNPSIAVPIVLKRLKMKEEEWREAQRGFNKVWREQNEKYYLKSLDHQGINFKQNDTKVLRSKSLLNEIESIYDERQEQATEENAGVPVGPHLSLAYEDKQILEDAAALIIHHVKRQTGIQKEDKYKIKQIMHHFIPDLLFAQRGDLSDVEEEEEEEMDVDEATGAPKKHNGVGGSPPKSKLLFSNTAAQKLRGMDEVYNLFYVNNNWYIFMRLHQILCLRLLRICSQAERQIEEENREREWEREVLGIKRDKSDSPAIQLRLKEPMDVDVEDYYPAFLDMVRSLLDGNIDSSQYEDSLREMFTIHAYIAFTMDKLIQSIVRQLQHIVSDEVCVQVTDLYLAENNNGATGGQLNSQTSRSLLESAYQRKAEQLMSDENCFKLMFIQSQGQVQLTVELLDTEEENSDDPVEAERWSDYVERYMSSDTTSPELREHLAQKPVFLPRNLRRIRKCQRGREQQEKEGKEGNSKKTMENVESLDKLECRFKLNSYKMVYVIKSEDYMYRRTALLRAHQSHERVSKRLHQRFQAWVDKWTKEHVPREMAAETSKWLMGEGLEGLVPCTTTCDTETLHFVSINKYRVKYGTVFKAP</sequence>